<feature type="chain" id="PRO_0000147529" description="Tetrahydromethanopterin S-methyltransferase subunit D">
    <location>
        <begin position="1"/>
        <end position="250"/>
    </location>
</feature>
<feature type="transmembrane region" description="Helical" evidence="1">
    <location>
        <begin position="9"/>
        <end position="29"/>
    </location>
</feature>
<feature type="transmembrane region" description="Helical" evidence="1">
    <location>
        <begin position="47"/>
        <end position="67"/>
    </location>
</feature>
<feature type="transmembrane region" description="Helical" evidence="1">
    <location>
        <begin position="86"/>
        <end position="106"/>
    </location>
</feature>
<feature type="transmembrane region" description="Helical" evidence="1">
    <location>
        <begin position="144"/>
        <end position="164"/>
    </location>
</feature>
<feature type="transmembrane region" description="Helical" evidence="1">
    <location>
        <begin position="184"/>
        <end position="204"/>
    </location>
</feature>
<feature type="transmembrane region" description="Helical" evidence="1">
    <location>
        <begin position="230"/>
        <end position="250"/>
    </location>
</feature>
<sequence>MIDAILGNIIWMALITIGGVLISWSVHFVPVGGAPAAMAQATGIGTGTVQLAAGAGLTGLVSAGFMMNVTDNLPLILASGSVGAMIMIAVTMIVGSIVYVYGVGVVPSSAKVKVDPITKYRQDLYVSQGTEGHGLPTVSYVSGIIGGGLGGIGGSLVYYSLIEVGMSAGLEAVGVTNSVTGHELVAVAAIFAIGIFFVNAVIPSYNIGGTIEGFHDPKFKKWPKAVVSSLVASIMCAIVAVVAIAQLGGI</sequence>
<proteinExistence type="inferred from homology"/>
<protein>
    <recommendedName>
        <fullName evidence="1">Tetrahydromethanopterin S-methyltransferase subunit D</fullName>
        <ecNumber evidence="1">7.2.1.4</ecNumber>
    </recommendedName>
    <alternativeName>
        <fullName evidence="1">N5-methyltetrahydromethanopterin--coenzyme M methyltransferase subunit D</fullName>
    </alternativeName>
</protein>
<accession>Q9Y8K1</accession>
<accession>Q46D18</accession>
<name>MTRD_METBF</name>
<evidence type="ECO:0000255" key="1">
    <source>
        <dbReference type="HAMAP-Rule" id="MF_01097"/>
    </source>
</evidence>
<comment type="function">
    <text evidence="1">Part of a complex that catalyzes the formation of methyl-coenzyme M and tetrahydromethanopterin from coenzyme M and methyl-tetrahydromethanopterin. This is an energy-conserving, sodium-ion translocating step.</text>
</comment>
<comment type="catalytic activity">
    <reaction evidence="1">
        <text>5-methyl-5,6,7,8-tetrahydromethanopterin + coenzyme M + 2 Na(+)(in) = 5,6,7,8-tetrahydromethanopterin + methyl-coenzyme M + 2 Na(+)(out)</text>
        <dbReference type="Rhea" id="RHEA:53492"/>
        <dbReference type="ChEBI" id="CHEBI:29101"/>
        <dbReference type="ChEBI" id="CHEBI:58103"/>
        <dbReference type="ChEBI" id="CHEBI:58116"/>
        <dbReference type="ChEBI" id="CHEBI:58286"/>
        <dbReference type="ChEBI" id="CHEBI:58319"/>
        <dbReference type="EC" id="7.2.1.4"/>
    </reaction>
</comment>
<comment type="pathway">
    <text evidence="1">One-carbon metabolism; methanogenesis from CO(2); methyl-coenzyme M from 5,10-methylene-5,6,7,8-tetrahydromethanopterin: step 2/2.</text>
</comment>
<comment type="subunit">
    <text evidence="1">The complex is composed of 8 subunits; MtrA, MtrB, MtrC, MtrD, MtrE, MtrF, MtrG and MtrH.</text>
</comment>
<comment type="subcellular location">
    <subcellularLocation>
        <location evidence="1">Cell membrane</location>
        <topology evidence="1">Multi-pass membrane protein</topology>
    </subcellularLocation>
</comment>
<comment type="similarity">
    <text evidence="1">Belongs to the MtrD family.</text>
</comment>
<gene>
    <name evidence="1" type="primary">mtrD</name>
    <name type="ordered locus">Mbar_A1261</name>
</gene>
<organism>
    <name type="scientific">Methanosarcina barkeri (strain Fusaro / DSM 804)</name>
    <dbReference type="NCBI Taxonomy" id="269797"/>
    <lineage>
        <taxon>Archaea</taxon>
        <taxon>Methanobacteriati</taxon>
        <taxon>Methanobacteriota</taxon>
        <taxon>Stenosarchaea group</taxon>
        <taxon>Methanomicrobia</taxon>
        <taxon>Methanosarcinales</taxon>
        <taxon>Methanosarcinaceae</taxon>
        <taxon>Methanosarcina</taxon>
    </lineage>
</organism>
<keyword id="KW-1003">Cell membrane</keyword>
<keyword id="KW-0472">Membrane</keyword>
<keyword id="KW-0484">Methanogenesis</keyword>
<keyword id="KW-0489">Methyltransferase</keyword>
<keyword id="KW-0554">One-carbon metabolism</keyword>
<keyword id="KW-0808">Transferase</keyword>
<keyword id="KW-1278">Translocase</keyword>
<keyword id="KW-0812">Transmembrane</keyword>
<keyword id="KW-1133">Transmembrane helix</keyword>
<dbReference type="EC" id="7.2.1.4" evidence="1"/>
<dbReference type="EMBL" id="AJ132817">
    <property type="protein sequence ID" value="CAB41639.1"/>
    <property type="molecule type" value="Genomic_DNA"/>
</dbReference>
<dbReference type="EMBL" id="CP000099">
    <property type="protein sequence ID" value="AAZ70224.1"/>
    <property type="molecule type" value="Genomic_DNA"/>
</dbReference>
<dbReference type="SMR" id="Q9Y8K1"/>
<dbReference type="STRING" id="269797.Mbar_A1261"/>
<dbReference type="PaxDb" id="269797-Mbar_A1261"/>
<dbReference type="GeneID" id="24825087"/>
<dbReference type="KEGG" id="mba:Mbar_A1261"/>
<dbReference type="eggNOG" id="arCOG04869">
    <property type="taxonomic scope" value="Archaea"/>
</dbReference>
<dbReference type="HOGENOM" id="CLU_1109510_0_0_2"/>
<dbReference type="OrthoDB" id="147994at2157"/>
<dbReference type="UniPathway" id="UPA00640">
    <property type="reaction ID" value="UER00698"/>
</dbReference>
<dbReference type="GO" id="GO:0005737">
    <property type="term" value="C:cytoplasm"/>
    <property type="evidence" value="ECO:0007669"/>
    <property type="project" value="InterPro"/>
</dbReference>
<dbReference type="GO" id="GO:0005886">
    <property type="term" value="C:plasma membrane"/>
    <property type="evidence" value="ECO:0007669"/>
    <property type="project" value="UniProtKB-SubCell"/>
</dbReference>
<dbReference type="GO" id="GO:0012506">
    <property type="term" value="C:vesicle membrane"/>
    <property type="evidence" value="ECO:0007669"/>
    <property type="project" value="InterPro"/>
</dbReference>
<dbReference type="GO" id="GO:0030269">
    <property type="term" value="F:tetrahydromethanopterin S-methyltransferase activity"/>
    <property type="evidence" value="ECO:0007669"/>
    <property type="project" value="UniProtKB-UniRule"/>
</dbReference>
<dbReference type="GO" id="GO:0019386">
    <property type="term" value="P:methanogenesis, from carbon dioxide"/>
    <property type="evidence" value="ECO:0007669"/>
    <property type="project" value="UniProtKB-UniRule"/>
</dbReference>
<dbReference type="GO" id="GO:0032259">
    <property type="term" value="P:methylation"/>
    <property type="evidence" value="ECO:0007669"/>
    <property type="project" value="UniProtKB-KW"/>
</dbReference>
<dbReference type="GO" id="GO:0006730">
    <property type="term" value="P:one-carbon metabolic process"/>
    <property type="evidence" value="ECO:0007669"/>
    <property type="project" value="UniProtKB-UniRule"/>
</dbReference>
<dbReference type="HAMAP" id="MF_01097">
    <property type="entry name" value="MtrD"/>
    <property type="match status" value="1"/>
</dbReference>
<dbReference type="InterPro" id="IPR005779">
    <property type="entry name" value="MeTrfase_D"/>
</dbReference>
<dbReference type="NCBIfam" id="TIGR01112">
    <property type="entry name" value="mtrD"/>
    <property type="match status" value="1"/>
</dbReference>
<dbReference type="Pfam" id="PF04207">
    <property type="entry name" value="MtrD"/>
    <property type="match status" value="1"/>
</dbReference>
<dbReference type="PIRSF" id="PIRSF016552">
    <property type="entry name" value="MtrD"/>
    <property type="match status" value="1"/>
</dbReference>
<reference key="1">
    <citation type="journal article" date="1999" name="FEBS Lett.">
        <title>The energy conserving methyltetrahydromethanopterin:coenzyme M methyltransferase complex from methanogenic archaea: function of the subunit MtrH.</title>
        <authorList>
            <person name="Hippler B."/>
            <person name="Thauer R.K."/>
        </authorList>
    </citation>
    <scope>NUCLEOTIDE SEQUENCE [GENOMIC DNA]</scope>
</reference>
<reference key="2">
    <citation type="journal article" date="2006" name="J. Bacteriol.">
        <title>The Methanosarcina barkeri genome: comparative analysis with Methanosarcina acetivorans and Methanosarcina mazei reveals extensive rearrangement within methanosarcinal genomes.</title>
        <authorList>
            <person name="Maeder D.L."/>
            <person name="Anderson I."/>
            <person name="Brettin T.S."/>
            <person name="Bruce D.C."/>
            <person name="Gilna P."/>
            <person name="Han C.S."/>
            <person name="Lapidus A."/>
            <person name="Metcalf W.W."/>
            <person name="Saunders E."/>
            <person name="Tapia R."/>
            <person name="Sowers K.R."/>
        </authorList>
    </citation>
    <scope>NUCLEOTIDE SEQUENCE [LARGE SCALE GENOMIC DNA]</scope>
    <source>
        <strain>Fusaro / DSM 804</strain>
    </source>
</reference>